<comment type="similarity">
    <text evidence="1">Belongs to the universal ribosomal protein uS9 family.</text>
</comment>
<organism>
    <name type="scientific">Bifidobacterium animalis subsp. lactis (strain AD011)</name>
    <dbReference type="NCBI Taxonomy" id="442563"/>
    <lineage>
        <taxon>Bacteria</taxon>
        <taxon>Bacillati</taxon>
        <taxon>Actinomycetota</taxon>
        <taxon>Actinomycetes</taxon>
        <taxon>Bifidobacteriales</taxon>
        <taxon>Bifidobacteriaceae</taxon>
        <taxon>Bifidobacterium</taxon>
    </lineage>
</organism>
<name>RS9_BIFA0</name>
<feature type="chain" id="PRO_1000146434" description="Small ribosomal subunit protein uS9">
    <location>
        <begin position="1"/>
        <end position="163"/>
    </location>
</feature>
<feature type="region of interest" description="Disordered" evidence="2">
    <location>
        <begin position="1"/>
        <end position="40"/>
    </location>
</feature>
<feature type="compositionally biased region" description="Low complexity" evidence="2">
    <location>
        <begin position="1"/>
        <end position="25"/>
    </location>
</feature>
<sequence>MAENTNNSAVTETEETTAAFTTETNSGAGTGTSTIAPGYGTGRRKEAVARVRLVPGTGEWKINGRTLEEYFPSKLLQREVNSPIVLLKLEGKFDAIVLVDGGGTTGQAGAIRLGVARALNAIDRDANRAALKKAGFLTRDARVVERKKAGLHKARRAPQFSKR</sequence>
<gene>
    <name evidence="1" type="primary">rpsI</name>
    <name type="ordered locus">BLA_0355</name>
</gene>
<keyword id="KW-1185">Reference proteome</keyword>
<keyword id="KW-0687">Ribonucleoprotein</keyword>
<keyword id="KW-0689">Ribosomal protein</keyword>
<reference key="1">
    <citation type="journal article" date="2009" name="J. Bacteriol.">
        <title>Genome sequence of the probiotic bacterium Bifidobacterium animalis subsp. lactis AD011.</title>
        <authorList>
            <person name="Kim J.F."/>
            <person name="Jeong H."/>
            <person name="Yu D.S."/>
            <person name="Choi S.-H."/>
            <person name="Hur C.-G."/>
            <person name="Park M.-S."/>
            <person name="Yoon S.H."/>
            <person name="Kim D.-W."/>
            <person name="Ji G.E."/>
            <person name="Park H.-S."/>
            <person name="Oh T.K."/>
        </authorList>
    </citation>
    <scope>NUCLEOTIDE SEQUENCE [LARGE SCALE GENOMIC DNA]</scope>
    <source>
        <strain>AD011</strain>
    </source>
</reference>
<evidence type="ECO:0000255" key="1">
    <source>
        <dbReference type="HAMAP-Rule" id="MF_00532"/>
    </source>
</evidence>
<evidence type="ECO:0000256" key="2">
    <source>
        <dbReference type="SAM" id="MobiDB-lite"/>
    </source>
</evidence>
<evidence type="ECO:0000305" key="3"/>
<proteinExistence type="inferred from homology"/>
<protein>
    <recommendedName>
        <fullName evidence="1">Small ribosomal subunit protein uS9</fullName>
    </recommendedName>
    <alternativeName>
        <fullName evidence="3">30S ribosomal protein S9</fullName>
    </alternativeName>
</protein>
<accession>B8DW06</accession>
<dbReference type="EMBL" id="CP001213">
    <property type="protein sequence ID" value="ACL28657.1"/>
    <property type="molecule type" value="Genomic_DNA"/>
</dbReference>
<dbReference type="RefSeq" id="WP_004268556.1">
    <property type="nucleotide sequence ID" value="NC_011835.1"/>
</dbReference>
<dbReference type="SMR" id="B8DW06"/>
<dbReference type="STRING" id="442563.BLA_0355"/>
<dbReference type="KEGG" id="bla:BLA_0355"/>
<dbReference type="HOGENOM" id="CLU_046483_2_0_11"/>
<dbReference type="Proteomes" id="UP000002456">
    <property type="component" value="Chromosome"/>
</dbReference>
<dbReference type="GO" id="GO:0005737">
    <property type="term" value="C:cytoplasm"/>
    <property type="evidence" value="ECO:0007669"/>
    <property type="project" value="UniProtKB-ARBA"/>
</dbReference>
<dbReference type="GO" id="GO:0015935">
    <property type="term" value="C:small ribosomal subunit"/>
    <property type="evidence" value="ECO:0007669"/>
    <property type="project" value="TreeGrafter"/>
</dbReference>
<dbReference type="GO" id="GO:0003723">
    <property type="term" value="F:RNA binding"/>
    <property type="evidence" value="ECO:0007669"/>
    <property type="project" value="TreeGrafter"/>
</dbReference>
<dbReference type="GO" id="GO:0003735">
    <property type="term" value="F:structural constituent of ribosome"/>
    <property type="evidence" value="ECO:0007669"/>
    <property type="project" value="InterPro"/>
</dbReference>
<dbReference type="GO" id="GO:0006412">
    <property type="term" value="P:translation"/>
    <property type="evidence" value="ECO:0007669"/>
    <property type="project" value="UniProtKB-UniRule"/>
</dbReference>
<dbReference type="FunFam" id="3.30.230.10:FF:000001">
    <property type="entry name" value="30S ribosomal protein S9"/>
    <property type="match status" value="1"/>
</dbReference>
<dbReference type="Gene3D" id="3.30.230.10">
    <property type="match status" value="1"/>
</dbReference>
<dbReference type="HAMAP" id="MF_00532_B">
    <property type="entry name" value="Ribosomal_uS9_B"/>
    <property type="match status" value="1"/>
</dbReference>
<dbReference type="InterPro" id="IPR020568">
    <property type="entry name" value="Ribosomal_Su5_D2-typ_SF"/>
</dbReference>
<dbReference type="InterPro" id="IPR000754">
    <property type="entry name" value="Ribosomal_uS9"/>
</dbReference>
<dbReference type="InterPro" id="IPR023035">
    <property type="entry name" value="Ribosomal_uS9_bac/plastid"/>
</dbReference>
<dbReference type="InterPro" id="IPR020574">
    <property type="entry name" value="Ribosomal_uS9_CS"/>
</dbReference>
<dbReference type="InterPro" id="IPR014721">
    <property type="entry name" value="Ribsml_uS5_D2-typ_fold_subgr"/>
</dbReference>
<dbReference type="NCBIfam" id="NF001099">
    <property type="entry name" value="PRK00132.1"/>
    <property type="match status" value="1"/>
</dbReference>
<dbReference type="PANTHER" id="PTHR21569">
    <property type="entry name" value="RIBOSOMAL PROTEIN S9"/>
    <property type="match status" value="1"/>
</dbReference>
<dbReference type="PANTHER" id="PTHR21569:SF1">
    <property type="entry name" value="SMALL RIBOSOMAL SUBUNIT PROTEIN US9M"/>
    <property type="match status" value="1"/>
</dbReference>
<dbReference type="Pfam" id="PF00380">
    <property type="entry name" value="Ribosomal_S9"/>
    <property type="match status" value="1"/>
</dbReference>
<dbReference type="SUPFAM" id="SSF54211">
    <property type="entry name" value="Ribosomal protein S5 domain 2-like"/>
    <property type="match status" value="1"/>
</dbReference>
<dbReference type="PROSITE" id="PS00360">
    <property type="entry name" value="RIBOSOMAL_S9"/>
    <property type="match status" value="1"/>
</dbReference>